<name>NUOI_SALTI</name>
<sequence>MTLKELLVGFGTQVRSIWMIGLHAFAKRETRMYPEEPVYLPPRYRGRIVLTRDPDGEERCVACNLCAVACPVGCISLQKAETKDGRWYPEFFRINFSRCIFCGLCEEACPTTAIQLTPDFELGEYKRQDLVYEKEDLLISGPGKYPEYNFYRMAGMAIDGKDKGEAENEAKPIDVKSLLP</sequence>
<organism>
    <name type="scientific">Salmonella typhi</name>
    <dbReference type="NCBI Taxonomy" id="90370"/>
    <lineage>
        <taxon>Bacteria</taxon>
        <taxon>Pseudomonadati</taxon>
        <taxon>Pseudomonadota</taxon>
        <taxon>Gammaproteobacteria</taxon>
        <taxon>Enterobacterales</taxon>
        <taxon>Enterobacteriaceae</taxon>
        <taxon>Salmonella</taxon>
    </lineage>
</organism>
<proteinExistence type="inferred from homology"/>
<evidence type="ECO:0000255" key="1">
    <source>
        <dbReference type="HAMAP-Rule" id="MF_01351"/>
    </source>
</evidence>
<keyword id="KW-0004">4Fe-4S</keyword>
<keyword id="KW-0997">Cell inner membrane</keyword>
<keyword id="KW-1003">Cell membrane</keyword>
<keyword id="KW-0408">Iron</keyword>
<keyword id="KW-0411">Iron-sulfur</keyword>
<keyword id="KW-0472">Membrane</keyword>
<keyword id="KW-0479">Metal-binding</keyword>
<keyword id="KW-0520">NAD</keyword>
<keyword id="KW-0874">Quinone</keyword>
<keyword id="KW-0677">Repeat</keyword>
<keyword id="KW-1278">Translocase</keyword>
<keyword id="KW-0830">Ubiquinone</keyword>
<accession>Q8XFD5</accession>
<accession>Q7AML8</accession>
<feature type="chain" id="PRO_0000245743" description="NADH-quinone oxidoreductase subunit I">
    <location>
        <begin position="1"/>
        <end position="180"/>
    </location>
</feature>
<feature type="domain" description="4Fe-4S ferredoxin-type 1" evidence="1">
    <location>
        <begin position="50"/>
        <end position="80"/>
    </location>
</feature>
<feature type="domain" description="4Fe-4S ferredoxin-type 2" evidence="1">
    <location>
        <begin position="90"/>
        <end position="119"/>
    </location>
</feature>
<feature type="binding site" evidence="1">
    <location>
        <position position="60"/>
    </location>
    <ligand>
        <name>[4Fe-4S] cluster</name>
        <dbReference type="ChEBI" id="CHEBI:49883"/>
        <label>1</label>
    </ligand>
</feature>
<feature type="binding site" evidence="1">
    <location>
        <position position="63"/>
    </location>
    <ligand>
        <name>[4Fe-4S] cluster</name>
        <dbReference type="ChEBI" id="CHEBI:49883"/>
        <label>1</label>
    </ligand>
</feature>
<feature type="binding site" evidence="1">
    <location>
        <position position="66"/>
    </location>
    <ligand>
        <name>[4Fe-4S] cluster</name>
        <dbReference type="ChEBI" id="CHEBI:49883"/>
        <label>1</label>
    </ligand>
</feature>
<feature type="binding site" evidence="1">
    <location>
        <position position="70"/>
    </location>
    <ligand>
        <name>[4Fe-4S] cluster</name>
        <dbReference type="ChEBI" id="CHEBI:49883"/>
        <label>2</label>
    </ligand>
</feature>
<feature type="binding site" evidence="1">
    <location>
        <position position="99"/>
    </location>
    <ligand>
        <name>[4Fe-4S] cluster</name>
        <dbReference type="ChEBI" id="CHEBI:49883"/>
        <label>2</label>
    </ligand>
</feature>
<feature type="binding site" evidence="1">
    <location>
        <position position="102"/>
    </location>
    <ligand>
        <name>[4Fe-4S] cluster</name>
        <dbReference type="ChEBI" id="CHEBI:49883"/>
        <label>2</label>
    </ligand>
</feature>
<feature type="binding site" evidence="1">
    <location>
        <position position="105"/>
    </location>
    <ligand>
        <name>[4Fe-4S] cluster</name>
        <dbReference type="ChEBI" id="CHEBI:49883"/>
        <label>2</label>
    </ligand>
</feature>
<feature type="binding site" evidence="1">
    <location>
        <position position="109"/>
    </location>
    <ligand>
        <name>[4Fe-4S] cluster</name>
        <dbReference type="ChEBI" id="CHEBI:49883"/>
        <label>1</label>
    </ligand>
</feature>
<protein>
    <recommendedName>
        <fullName evidence="1">NADH-quinone oxidoreductase subunit I</fullName>
        <ecNumber evidence="1">7.1.1.-</ecNumber>
    </recommendedName>
    <alternativeName>
        <fullName evidence="1">NADH dehydrogenase I subunit I</fullName>
    </alternativeName>
    <alternativeName>
        <fullName evidence="1">NDH-1 subunit I</fullName>
    </alternativeName>
</protein>
<comment type="function">
    <text evidence="1">NDH-1 shuttles electrons from NADH, via FMN and iron-sulfur (Fe-S) centers, to quinones in the respiratory chain. The immediate electron acceptor for the enzyme in this species is believed to be ubiquinone. Couples the redox reaction to proton translocation (for every two electrons transferred, four hydrogen ions are translocated across the cytoplasmic membrane), and thus conserves the redox energy in a proton gradient.</text>
</comment>
<comment type="catalytic activity">
    <reaction evidence="1">
        <text>a quinone + NADH + 5 H(+)(in) = a quinol + NAD(+) + 4 H(+)(out)</text>
        <dbReference type="Rhea" id="RHEA:57888"/>
        <dbReference type="ChEBI" id="CHEBI:15378"/>
        <dbReference type="ChEBI" id="CHEBI:24646"/>
        <dbReference type="ChEBI" id="CHEBI:57540"/>
        <dbReference type="ChEBI" id="CHEBI:57945"/>
        <dbReference type="ChEBI" id="CHEBI:132124"/>
    </reaction>
</comment>
<comment type="cofactor">
    <cofactor evidence="1">
        <name>[4Fe-4S] cluster</name>
        <dbReference type="ChEBI" id="CHEBI:49883"/>
    </cofactor>
    <text evidence="1">Binds 2 [4Fe-4S] clusters per subunit.</text>
</comment>
<comment type="subunit">
    <text evidence="1">NDH-1 is composed of 13 different subunits. Subunits NuoA, H, J, K, L, M, N constitute the membrane sector of the complex.</text>
</comment>
<comment type="subcellular location">
    <subcellularLocation>
        <location evidence="1">Cell inner membrane</location>
        <topology evidence="1">Peripheral membrane protein</topology>
    </subcellularLocation>
</comment>
<comment type="similarity">
    <text evidence="1">Belongs to the complex I 23 kDa subunit family.</text>
</comment>
<dbReference type="EC" id="7.1.1.-" evidence="1"/>
<dbReference type="EMBL" id="AE014613">
    <property type="protein sequence ID" value="AAO68249.1"/>
    <property type="molecule type" value="Genomic_DNA"/>
</dbReference>
<dbReference type="EMBL" id="AL513382">
    <property type="protein sequence ID" value="CAD07553.1"/>
    <property type="molecule type" value="Genomic_DNA"/>
</dbReference>
<dbReference type="RefSeq" id="NP_456863.1">
    <property type="nucleotide sequence ID" value="NC_003198.1"/>
</dbReference>
<dbReference type="RefSeq" id="WP_000172747.1">
    <property type="nucleotide sequence ID" value="NZ_WSUR01000039.1"/>
</dbReference>
<dbReference type="SMR" id="Q8XFD5"/>
<dbReference type="STRING" id="220341.gene:17586450"/>
<dbReference type="KEGG" id="stt:t0543"/>
<dbReference type="KEGG" id="sty:STY2551"/>
<dbReference type="PATRIC" id="fig|220341.7.peg.2581"/>
<dbReference type="eggNOG" id="COG1143">
    <property type="taxonomic scope" value="Bacteria"/>
</dbReference>
<dbReference type="HOGENOM" id="CLU_067218_4_3_6"/>
<dbReference type="OMA" id="WYPDFFR"/>
<dbReference type="OrthoDB" id="9808559at2"/>
<dbReference type="Proteomes" id="UP000000541">
    <property type="component" value="Chromosome"/>
</dbReference>
<dbReference type="Proteomes" id="UP000002670">
    <property type="component" value="Chromosome"/>
</dbReference>
<dbReference type="GO" id="GO:0005886">
    <property type="term" value="C:plasma membrane"/>
    <property type="evidence" value="ECO:0007669"/>
    <property type="project" value="UniProtKB-SubCell"/>
</dbReference>
<dbReference type="GO" id="GO:0051539">
    <property type="term" value="F:4 iron, 4 sulfur cluster binding"/>
    <property type="evidence" value="ECO:0007669"/>
    <property type="project" value="UniProtKB-KW"/>
</dbReference>
<dbReference type="GO" id="GO:0005506">
    <property type="term" value="F:iron ion binding"/>
    <property type="evidence" value="ECO:0007669"/>
    <property type="project" value="UniProtKB-UniRule"/>
</dbReference>
<dbReference type="GO" id="GO:0050136">
    <property type="term" value="F:NADH:ubiquinone reductase (non-electrogenic) activity"/>
    <property type="evidence" value="ECO:0007669"/>
    <property type="project" value="UniProtKB-UniRule"/>
</dbReference>
<dbReference type="GO" id="GO:0048038">
    <property type="term" value="F:quinone binding"/>
    <property type="evidence" value="ECO:0007669"/>
    <property type="project" value="UniProtKB-KW"/>
</dbReference>
<dbReference type="GO" id="GO:0009060">
    <property type="term" value="P:aerobic respiration"/>
    <property type="evidence" value="ECO:0007669"/>
    <property type="project" value="TreeGrafter"/>
</dbReference>
<dbReference type="FunFam" id="3.30.70.3270:FF:000002">
    <property type="entry name" value="NADH-quinone oxidoreductase subunit I"/>
    <property type="match status" value="1"/>
</dbReference>
<dbReference type="Gene3D" id="3.30.70.3270">
    <property type="match status" value="1"/>
</dbReference>
<dbReference type="HAMAP" id="MF_01351">
    <property type="entry name" value="NDH1_NuoI"/>
    <property type="match status" value="1"/>
</dbReference>
<dbReference type="InterPro" id="IPR017896">
    <property type="entry name" value="4Fe4S_Fe-S-bd"/>
</dbReference>
<dbReference type="InterPro" id="IPR017900">
    <property type="entry name" value="4Fe4S_Fe_S_CS"/>
</dbReference>
<dbReference type="InterPro" id="IPR010226">
    <property type="entry name" value="NADH_quinone_OxRdtase_chainI"/>
</dbReference>
<dbReference type="NCBIfam" id="TIGR01971">
    <property type="entry name" value="NuoI"/>
    <property type="match status" value="1"/>
</dbReference>
<dbReference type="NCBIfam" id="NF004536">
    <property type="entry name" value="PRK05888.1-1"/>
    <property type="match status" value="1"/>
</dbReference>
<dbReference type="PANTHER" id="PTHR10849:SF20">
    <property type="entry name" value="NADH DEHYDROGENASE [UBIQUINONE] IRON-SULFUR PROTEIN 8, MITOCHONDRIAL"/>
    <property type="match status" value="1"/>
</dbReference>
<dbReference type="PANTHER" id="PTHR10849">
    <property type="entry name" value="NADH DEHYDROGENASE UBIQUINONE IRON-SULFUR PROTEIN 8, MITOCHONDRIAL"/>
    <property type="match status" value="1"/>
</dbReference>
<dbReference type="Pfam" id="PF12838">
    <property type="entry name" value="Fer4_7"/>
    <property type="match status" value="1"/>
</dbReference>
<dbReference type="SUPFAM" id="SSF54862">
    <property type="entry name" value="4Fe-4S ferredoxins"/>
    <property type="match status" value="1"/>
</dbReference>
<dbReference type="PROSITE" id="PS00198">
    <property type="entry name" value="4FE4S_FER_1"/>
    <property type="match status" value="2"/>
</dbReference>
<dbReference type="PROSITE" id="PS51379">
    <property type="entry name" value="4FE4S_FER_2"/>
    <property type="match status" value="2"/>
</dbReference>
<gene>
    <name evidence="1" type="primary">nuoI</name>
    <name type="ordered locus">STY2551</name>
    <name type="ordered locus">t0543</name>
</gene>
<reference key="1">
    <citation type="journal article" date="2003" name="J. Bacteriol.">
        <title>Comparative genomics of Salmonella enterica serovar Typhi strains Ty2 and CT18.</title>
        <authorList>
            <person name="Deng W."/>
            <person name="Liou S.-R."/>
            <person name="Plunkett G. III"/>
            <person name="Mayhew G.F."/>
            <person name="Rose D.J."/>
            <person name="Burland V."/>
            <person name="Kodoyianni V."/>
            <person name="Schwartz D.C."/>
            <person name="Blattner F.R."/>
        </authorList>
    </citation>
    <scope>NUCLEOTIDE SEQUENCE [LARGE SCALE GENOMIC DNA]</scope>
    <source>
        <strain>ATCC 700931 / Ty2</strain>
    </source>
</reference>
<reference key="2">
    <citation type="journal article" date="2001" name="Nature">
        <title>Complete genome sequence of a multiple drug resistant Salmonella enterica serovar Typhi CT18.</title>
        <authorList>
            <person name="Parkhill J."/>
            <person name="Dougan G."/>
            <person name="James K.D."/>
            <person name="Thomson N.R."/>
            <person name="Pickard D."/>
            <person name="Wain J."/>
            <person name="Churcher C.M."/>
            <person name="Mungall K.L."/>
            <person name="Bentley S.D."/>
            <person name="Holden M.T.G."/>
            <person name="Sebaihia M."/>
            <person name="Baker S."/>
            <person name="Basham D."/>
            <person name="Brooks K."/>
            <person name="Chillingworth T."/>
            <person name="Connerton P."/>
            <person name="Cronin A."/>
            <person name="Davis P."/>
            <person name="Davies R.M."/>
            <person name="Dowd L."/>
            <person name="White N."/>
            <person name="Farrar J."/>
            <person name="Feltwell T."/>
            <person name="Hamlin N."/>
            <person name="Haque A."/>
            <person name="Hien T.T."/>
            <person name="Holroyd S."/>
            <person name="Jagels K."/>
            <person name="Krogh A."/>
            <person name="Larsen T.S."/>
            <person name="Leather S."/>
            <person name="Moule S."/>
            <person name="O'Gaora P."/>
            <person name="Parry C."/>
            <person name="Quail M.A."/>
            <person name="Rutherford K.M."/>
            <person name="Simmonds M."/>
            <person name="Skelton J."/>
            <person name="Stevens K."/>
            <person name="Whitehead S."/>
            <person name="Barrell B.G."/>
        </authorList>
    </citation>
    <scope>NUCLEOTIDE SEQUENCE [LARGE SCALE GENOMIC DNA]</scope>
    <source>
        <strain>CT18</strain>
    </source>
</reference>